<accession>O93661</accession>
<accession>Q9C4B8</accession>
<keyword id="KW-0903">Direct protein sequencing</keyword>
<keyword id="KW-0484">Methanogenesis</keyword>
<keyword id="KW-0489">Methyltransferase</keyword>
<keyword id="KW-0669">Pyrrolysine</keyword>
<keyword id="KW-0808">Transferase</keyword>
<name>MTBB1_METBA</name>
<comment type="function">
    <text evidence="2 3">Catalyzes the transfer of a methyl group from dimethylamine to the corrinoid cofactor of MtbC (PubMed:10852929). The major or perhaps only DMA methyltransferase expressed under inducing conditions (PubMed:16096277).</text>
</comment>
<comment type="catalytic activity">
    <reaction evidence="2">
        <text>Co(I)-[dimethylamine-specific corrinoid protein] + dimethylamine + H(+) = methyl-Co(III)-[dimethylamine-specific corrinoid protein] + methylamine</text>
        <dbReference type="Rhea" id="RHEA:41175"/>
        <dbReference type="Rhea" id="RHEA-COMP:11122"/>
        <dbReference type="Rhea" id="RHEA-COMP:11123"/>
        <dbReference type="ChEBI" id="CHEBI:15378"/>
        <dbReference type="ChEBI" id="CHEBI:58040"/>
        <dbReference type="ChEBI" id="CHEBI:59338"/>
        <dbReference type="ChEBI" id="CHEBI:85033"/>
        <dbReference type="ChEBI" id="CHEBI:85035"/>
        <dbReference type="EC" id="2.1.1.249"/>
    </reaction>
</comment>
<comment type="pathway">
    <text evidence="6">One-carbon metabolism; methanogenesis from dimethylamine.</text>
</comment>
<comment type="subunit">
    <text>May form homotetramers or homopentamers.</text>
</comment>
<comment type="induction">
    <text evidence="1">Induced by growth on trimethylamine but not methanol or monomethylamine. Part of the mtbC-mttB-mttC-mttP-mtbB1 operon.</text>
</comment>
<comment type="similarity">
    <text evidence="5">Belongs to the dimethylamine methyltransferase family.</text>
</comment>
<protein>
    <recommendedName>
        <fullName>Dimethylamine methyltransferase MtbB1</fullName>
        <shortName>DMA methyltransferase 1</shortName>
        <shortName>DMAMT 1</shortName>
        <ecNumber evidence="2">2.1.1.249</ecNumber>
    </recommendedName>
    <alternativeName>
        <fullName>Dimethylamine--corrinoid protein methyltransferase 1</fullName>
    </alternativeName>
</protein>
<evidence type="ECO:0000269" key="1">
    <source>
    </source>
</evidence>
<evidence type="ECO:0000269" key="2">
    <source>
    </source>
</evidence>
<evidence type="ECO:0000269" key="3">
    <source>
    </source>
</evidence>
<evidence type="ECO:0000303" key="4">
    <source>
    </source>
</evidence>
<evidence type="ECO:0000305" key="5"/>
<evidence type="ECO:0000305" key="6">
    <source>
    </source>
</evidence>
<proteinExistence type="evidence at protein level"/>
<reference key="1">
    <citation type="journal article" date="2000" name="J. Bacteriol.">
        <title>The trimethylamine methyltransferase gene and multiple dimethylamine methyltransferase genes of Methanosarcina barkeri contain in-frame and read-through amber codons.</title>
        <authorList>
            <person name="Paul L."/>
            <person name="Ferguson D.J. Jr."/>
            <person name="Krzycki J.A."/>
        </authorList>
    </citation>
    <scope>NUCLEOTIDE SEQUENCE [GENOMIC DNA]</scope>
    <scope>PROTEIN SEQUENCE OF 1-20 AND 460-467</scope>
    <scope>PATHWAY</scope>
    <scope>INDUCTION BY TRIMETHYLAMINE</scope>
    <source>
        <strain>ATCC 43569 / MS / DSM 800 / JCM 10043 / NBRC 100474</strain>
    </source>
</reference>
<reference key="2">
    <citation type="journal article" date="2000" name="J. Biol. Chem.">
        <title>Reconstitution of dimethylamine:coenzyme M methyl transfer with a discrete corrinoid protein and two methyltransferases purified from Methanosarcina barkeri.</title>
        <authorList>
            <person name="Ferguson D.J. Jr."/>
            <person name="Gorlatova N."/>
            <person name="Grahame D.A."/>
            <person name="Krzycki J.A."/>
        </authorList>
    </citation>
    <scope>PROTEIN SEQUENCE OF 1-20</scope>
    <scope>FUNCTION</scope>
    <scope>CATALYTIC ACTIVITY</scope>
    <source>
        <strain>ATCC 43569 / MS / DSM 800 / JCM 10043 / NBRC 100474</strain>
    </source>
</reference>
<reference key="3">
    <citation type="submission" date="2001-01" db="EMBL/GenBank/DDBJ databases">
        <authorList>
            <person name="Srinivasan G."/>
            <person name="Paul L."/>
            <person name="Lienard T."/>
            <person name="Gottschalk G."/>
            <person name="Krzycki J.A."/>
        </authorList>
    </citation>
    <scope>NUCLEOTIDE SEQUENCE [GENOMIC DNA] OF 48-467</scope>
</reference>
<reference key="4">
    <citation type="journal article" date="2005" name="J. Biol. Chem.">
        <title>The residue mass of L-pyrrolysine in three distinct methylamine methyltransferases.</title>
        <authorList>
            <person name="Soares J.A."/>
            <person name="Zhang L."/>
            <person name="Pitsch R.L."/>
            <person name="Kleinholz N.M."/>
            <person name="Jones R.B."/>
            <person name="Wolff J.J."/>
            <person name="Amster J."/>
            <person name="Green-Church K.B."/>
            <person name="Krzycki J.A."/>
        </authorList>
    </citation>
    <scope>PYRROLYSINE AT PYL-356</scope>
    <source>
        <strain>ATCC 43569 / MS / DSM 800 / JCM 10043 / NBRC 100474</strain>
    </source>
</reference>
<feature type="chain" id="PRO_0000216558" description="Dimethylamine methyltransferase MtbB1">
    <location>
        <begin position="1"/>
        <end position="467"/>
    </location>
</feature>
<feature type="non-standard amino acid" description="Pyrrolysine" evidence="3">
    <location>
        <position position="356"/>
    </location>
</feature>
<sequence length="467" mass="50228">MATEYALRMGDGKRVYLTKEKIVSEIEAGTADAADLGEIPALSANEMDKLAEILMMPGKTVSVEQGMEIPVTHDIGTIRLDGDQGNSGVGIPSSRLVGCMTHERAFGADTMELGHIDYSFKPVKPVVSNECQAMEVCQQNMVIPLFYGAMPNMGLYYTPDGPFENPGDLMKAFKIQEAWESMEHAAEHLTRDTVWVMQKLFASGADGVNFDTTGAAGDGDMYGTLHAIEALRKEFPDMYIEAGMAGECVLGMHGNLQYDGVTLAGLWPHQQAPLVAKAGANVFGPVCNTNTSKTSAWNLARAVTFMKAAVEASPIPCHVDMGMGVGGIPMLETPPIDAVTRASKAMVEIAGVDGIOIGVGDPLGMPIAHIMASGMTGMRAAGDLVARMEFSKNMRIGEAKEYVAKKLGVDKMDLVDEHVMRELREELDIGIITSVPGAAKGIAAKMNIEKLLDIKINSCNLFRKQIA</sequence>
<gene>
    <name evidence="4" type="primary">mtbB1</name>
</gene>
<dbReference type="EC" id="2.1.1.249" evidence="2"/>
<dbReference type="EMBL" id="AF102623">
    <property type="protein sequence ID" value="AAD14633.2"/>
    <property type="molecule type" value="Genomic_DNA"/>
</dbReference>
<dbReference type="EMBL" id="AF337056">
    <property type="protein sequence ID" value="AAK29407.1"/>
    <property type="molecule type" value="Genomic_DNA"/>
</dbReference>
<dbReference type="KEGG" id="ag:AAD14633"/>
<dbReference type="BioCyc" id="MetaCyc:MONOMER-12212"/>
<dbReference type="BRENDA" id="2.1.1.249">
    <property type="organism ID" value="3250"/>
</dbReference>
<dbReference type="UniPathway" id="UPA00644"/>
<dbReference type="GO" id="GO:0043791">
    <property type="term" value="F:dimethylamine methyltransferase activity"/>
    <property type="evidence" value="ECO:0000314"/>
    <property type="project" value="UniProtKB"/>
</dbReference>
<dbReference type="GO" id="GO:2001129">
    <property type="term" value="P:methane biosynthetic process from dimethylamine"/>
    <property type="evidence" value="ECO:0000314"/>
    <property type="project" value="UniProtKB"/>
</dbReference>
<dbReference type="GO" id="GO:0032259">
    <property type="term" value="P:methylation"/>
    <property type="evidence" value="ECO:0007669"/>
    <property type="project" value="UniProtKB-KW"/>
</dbReference>
<dbReference type="InterPro" id="IPR012653">
    <property type="entry name" value="Dimeth_MeTrfase_MtbB"/>
</dbReference>
<dbReference type="NCBIfam" id="TIGR02368">
    <property type="entry name" value="dimeth_PyL"/>
    <property type="match status" value="1"/>
</dbReference>
<dbReference type="Pfam" id="PF09505">
    <property type="entry name" value="Dimeth_Pyl"/>
    <property type="match status" value="1"/>
</dbReference>
<organism>
    <name type="scientific">Methanosarcina barkeri</name>
    <dbReference type="NCBI Taxonomy" id="2208"/>
    <lineage>
        <taxon>Archaea</taxon>
        <taxon>Methanobacteriati</taxon>
        <taxon>Methanobacteriota</taxon>
        <taxon>Stenosarchaea group</taxon>
        <taxon>Methanomicrobia</taxon>
        <taxon>Methanosarcinales</taxon>
        <taxon>Methanosarcinaceae</taxon>
        <taxon>Methanosarcina</taxon>
    </lineage>
</organism>